<protein>
    <recommendedName>
        <fullName evidence="1">Isocitrate dehydrogenase kinase/phosphatase</fullName>
        <shortName evidence="1">IDH kinase/phosphatase</shortName>
        <shortName evidence="1">IDHK/P</shortName>
        <ecNumber evidence="1">2.7.11.5</ecNumber>
        <ecNumber evidence="1">3.1.3.-</ecNumber>
    </recommendedName>
</protein>
<accession>A7ZUN0</accession>
<sequence>MPRGLELLIAQTILQGFDAQYGRFLEVTSGAQQRFEQADWHAVQQAMKNRIHLYDHHVGLVVEQLRCITNGQSTDAAFLLRVKEHYTRLLPDYPRFEIAESFFNSVYCRLFDHRSLTPERLFIFSSQPERRFRTIPRPLAKDFHPDHGWESLLMRVISDLPLRLRWQNKSRDIHYIIRHLTETLGTDNLAESHLQVANELFYRNKAAWLVGKLITPSGTLPFLLPIHQTDDGELFIDTCLTTTAEASIVFGFARSYFMVYAPLPAALVEWLREILPGKTTAELYMAIGCQKHAKTESYREYLVYLQGCNEQFIEAPGIRGMVMLVFTLPGFDRVFKVIKDKFAPQKEMSAAHVRACYQLVKEHDRVGRMADTQEFENFVLEKRHISPALMELLLQEAAEKITDLGEQIVIRHLYIERRMVPLNIWLEQVEGQQLRDAIEEYGNAIRQLAAANIFPGDMLFKNFGVTRHGRVVFYDYDEICYMTEVNFRDIPPPRYPEDELASEPWYSVSPGDVFPEEFRHWLCADPRIGPLFEEMHADLFRADYWRALQNRIREGHVEDVYAYRRRQRFSVRYGEMLF</sequence>
<reference key="1">
    <citation type="journal article" date="2008" name="J. Bacteriol.">
        <title>The pangenome structure of Escherichia coli: comparative genomic analysis of E. coli commensal and pathogenic isolates.</title>
        <authorList>
            <person name="Rasko D.A."/>
            <person name="Rosovitz M.J."/>
            <person name="Myers G.S.A."/>
            <person name="Mongodin E.F."/>
            <person name="Fricke W.F."/>
            <person name="Gajer P."/>
            <person name="Crabtree J."/>
            <person name="Sebaihia M."/>
            <person name="Thomson N.R."/>
            <person name="Chaudhuri R."/>
            <person name="Henderson I.R."/>
            <person name="Sperandio V."/>
            <person name="Ravel J."/>
        </authorList>
    </citation>
    <scope>NUCLEOTIDE SEQUENCE [LARGE SCALE GENOMIC DNA]</scope>
    <source>
        <strain>E24377A / ETEC</strain>
    </source>
</reference>
<proteinExistence type="inferred from homology"/>
<name>ACEK_ECO24</name>
<dbReference type="EC" id="2.7.11.5" evidence="1"/>
<dbReference type="EC" id="3.1.3.-" evidence="1"/>
<dbReference type="EMBL" id="CP000800">
    <property type="protein sequence ID" value="ABV19968.1"/>
    <property type="molecule type" value="Genomic_DNA"/>
</dbReference>
<dbReference type="RefSeq" id="WP_001137214.1">
    <property type="nucleotide sequence ID" value="NC_009801.1"/>
</dbReference>
<dbReference type="SMR" id="A7ZUN0"/>
<dbReference type="GeneID" id="75204156"/>
<dbReference type="KEGG" id="ecw:EcE24377A_4561"/>
<dbReference type="HOGENOM" id="CLU_033804_1_1_6"/>
<dbReference type="Proteomes" id="UP000001122">
    <property type="component" value="Chromosome"/>
</dbReference>
<dbReference type="GO" id="GO:0005737">
    <property type="term" value="C:cytoplasm"/>
    <property type="evidence" value="ECO:0007669"/>
    <property type="project" value="UniProtKB-SubCell"/>
</dbReference>
<dbReference type="GO" id="GO:0008772">
    <property type="term" value="F:[isocitrate dehydrogenase (NADP+)] kinase activity"/>
    <property type="evidence" value="ECO:0007669"/>
    <property type="project" value="UniProtKB-UniRule"/>
</dbReference>
<dbReference type="GO" id="GO:0016208">
    <property type="term" value="F:AMP binding"/>
    <property type="evidence" value="ECO:0007669"/>
    <property type="project" value="TreeGrafter"/>
</dbReference>
<dbReference type="GO" id="GO:0005524">
    <property type="term" value="F:ATP binding"/>
    <property type="evidence" value="ECO:0007669"/>
    <property type="project" value="UniProtKB-UniRule"/>
</dbReference>
<dbReference type="GO" id="GO:0004721">
    <property type="term" value="F:phosphoprotein phosphatase activity"/>
    <property type="evidence" value="ECO:0007669"/>
    <property type="project" value="UniProtKB-KW"/>
</dbReference>
<dbReference type="GO" id="GO:0004674">
    <property type="term" value="F:protein serine/threonine kinase activity"/>
    <property type="evidence" value="ECO:0007669"/>
    <property type="project" value="UniProtKB-KW"/>
</dbReference>
<dbReference type="GO" id="GO:0006006">
    <property type="term" value="P:glucose metabolic process"/>
    <property type="evidence" value="ECO:0007669"/>
    <property type="project" value="InterPro"/>
</dbReference>
<dbReference type="GO" id="GO:0006097">
    <property type="term" value="P:glyoxylate cycle"/>
    <property type="evidence" value="ECO:0007669"/>
    <property type="project" value="UniProtKB-UniRule"/>
</dbReference>
<dbReference type="GO" id="GO:0006099">
    <property type="term" value="P:tricarboxylic acid cycle"/>
    <property type="evidence" value="ECO:0007669"/>
    <property type="project" value="UniProtKB-UniRule"/>
</dbReference>
<dbReference type="HAMAP" id="MF_00747">
    <property type="entry name" value="AceK"/>
    <property type="match status" value="1"/>
</dbReference>
<dbReference type="InterPro" id="IPR046855">
    <property type="entry name" value="AceK_kinase"/>
</dbReference>
<dbReference type="InterPro" id="IPR046854">
    <property type="entry name" value="AceK_regulatory"/>
</dbReference>
<dbReference type="InterPro" id="IPR010452">
    <property type="entry name" value="Isocitrate_DH_AceK"/>
</dbReference>
<dbReference type="NCBIfam" id="NF002804">
    <property type="entry name" value="PRK02946.1"/>
    <property type="match status" value="1"/>
</dbReference>
<dbReference type="PANTHER" id="PTHR39559">
    <property type="match status" value="1"/>
</dbReference>
<dbReference type="PANTHER" id="PTHR39559:SF1">
    <property type="entry name" value="ISOCITRATE DEHYDROGENASE KINASE_PHOSPHATASE"/>
    <property type="match status" value="1"/>
</dbReference>
<dbReference type="Pfam" id="PF06315">
    <property type="entry name" value="AceK_kinase"/>
    <property type="match status" value="1"/>
</dbReference>
<dbReference type="Pfam" id="PF20423">
    <property type="entry name" value="AceK_regulatory"/>
    <property type="match status" value="1"/>
</dbReference>
<dbReference type="PIRSF" id="PIRSF000719">
    <property type="entry name" value="AceK"/>
    <property type="match status" value="1"/>
</dbReference>
<organism>
    <name type="scientific">Escherichia coli O139:H28 (strain E24377A / ETEC)</name>
    <dbReference type="NCBI Taxonomy" id="331111"/>
    <lineage>
        <taxon>Bacteria</taxon>
        <taxon>Pseudomonadati</taxon>
        <taxon>Pseudomonadota</taxon>
        <taxon>Gammaproteobacteria</taxon>
        <taxon>Enterobacterales</taxon>
        <taxon>Enterobacteriaceae</taxon>
        <taxon>Escherichia</taxon>
    </lineage>
</organism>
<evidence type="ECO:0000255" key="1">
    <source>
        <dbReference type="HAMAP-Rule" id="MF_00747"/>
    </source>
</evidence>
<gene>
    <name evidence="1" type="primary">aceK</name>
    <name type="ordered locus">EcE24377A_4561</name>
</gene>
<feature type="chain" id="PRO_0000315266" description="Isocitrate dehydrogenase kinase/phosphatase">
    <location>
        <begin position="1"/>
        <end position="578"/>
    </location>
</feature>
<feature type="active site" evidence="1">
    <location>
        <position position="371"/>
    </location>
</feature>
<feature type="binding site" evidence="1">
    <location>
        <begin position="315"/>
        <end position="321"/>
    </location>
    <ligand>
        <name>ATP</name>
        <dbReference type="ChEBI" id="CHEBI:30616"/>
    </ligand>
</feature>
<feature type="binding site" evidence="1">
    <location>
        <position position="336"/>
    </location>
    <ligand>
        <name>ATP</name>
        <dbReference type="ChEBI" id="CHEBI:30616"/>
    </ligand>
</feature>
<keyword id="KW-0067">ATP-binding</keyword>
<keyword id="KW-0963">Cytoplasm</keyword>
<keyword id="KW-0329">Glyoxylate bypass</keyword>
<keyword id="KW-0378">Hydrolase</keyword>
<keyword id="KW-0418">Kinase</keyword>
<keyword id="KW-0547">Nucleotide-binding</keyword>
<keyword id="KW-0904">Protein phosphatase</keyword>
<keyword id="KW-1185">Reference proteome</keyword>
<keyword id="KW-0723">Serine/threonine-protein kinase</keyword>
<keyword id="KW-0808">Transferase</keyword>
<keyword id="KW-0816">Tricarboxylic acid cycle</keyword>
<comment type="function">
    <text evidence="1">Bifunctional enzyme which can phosphorylate or dephosphorylate isocitrate dehydrogenase (IDH) on a specific serine residue. This is a regulatory mechanism which enables bacteria to bypass the Krebs cycle via the glyoxylate shunt in response to the source of carbon. When bacteria are grown on glucose, IDH is fully active and unphosphorylated, but when grown on acetate or ethanol, the activity of IDH declines drastically concomitant with its phosphorylation.</text>
</comment>
<comment type="catalytic activity">
    <reaction evidence="1">
        <text>L-seryl-[isocitrate dehydrogenase] + ATP = O-phospho-L-seryl-[isocitrate dehydrogenase] + ADP + H(+)</text>
        <dbReference type="Rhea" id="RHEA:43540"/>
        <dbReference type="Rhea" id="RHEA-COMP:10605"/>
        <dbReference type="Rhea" id="RHEA-COMP:10606"/>
        <dbReference type="ChEBI" id="CHEBI:15378"/>
        <dbReference type="ChEBI" id="CHEBI:29999"/>
        <dbReference type="ChEBI" id="CHEBI:30616"/>
        <dbReference type="ChEBI" id="CHEBI:83421"/>
        <dbReference type="ChEBI" id="CHEBI:456216"/>
        <dbReference type="EC" id="2.7.11.5"/>
    </reaction>
</comment>
<comment type="subcellular location">
    <subcellularLocation>
        <location evidence="1">Cytoplasm</location>
    </subcellularLocation>
</comment>
<comment type="similarity">
    <text evidence="1">Belongs to the AceK family.</text>
</comment>